<reference key="1">
    <citation type="journal article" date="2008" name="PLoS Genet.">
        <title>Complete genome sequence of the complex carbohydrate-degrading marine bacterium, Saccharophagus degradans strain 2-40 T.</title>
        <authorList>
            <person name="Weiner R.M."/>
            <person name="Taylor L.E. II"/>
            <person name="Henrissat B."/>
            <person name="Hauser L."/>
            <person name="Land M."/>
            <person name="Coutinho P.M."/>
            <person name="Rancurel C."/>
            <person name="Saunders E.H."/>
            <person name="Longmire A.G."/>
            <person name="Zhang H."/>
            <person name="Bayer E.A."/>
            <person name="Gilbert H.J."/>
            <person name="Larimer F."/>
            <person name="Zhulin I.B."/>
            <person name="Ekborg N.A."/>
            <person name="Lamed R."/>
            <person name="Richardson P.M."/>
            <person name="Borovok I."/>
            <person name="Hutcheson S."/>
        </authorList>
    </citation>
    <scope>NUCLEOTIDE SEQUENCE [LARGE SCALE GENOMIC DNA]</scope>
    <source>
        <strain>2-40 / ATCC 43961 / DSM 17024</strain>
    </source>
</reference>
<gene>
    <name evidence="1" type="primary">ispG</name>
    <name type="ordered locus">Sde_1434</name>
</gene>
<comment type="function">
    <text evidence="1">Converts 2C-methyl-D-erythritol 2,4-cyclodiphosphate (ME-2,4cPP) into 1-hydroxy-2-methyl-2-(E)-butenyl 4-diphosphate.</text>
</comment>
<comment type="catalytic activity">
    <reaction evidence="1">
        <text>(2E)-4-hydroxy-3-methylbut-2-enyl diphosphate + oxidized [flavodoxin] + H2O + 2 H(+) = 2-C-methyl-D-erythritol 2,4-cyclic diphosphate + reduced [flavodoxin]</text>
        <dbReference type="Rhea" id="RHEA:43604"/>
        <dbReference type="Rhea" id="RHEA-COMP:10622"/>
        <dbReference type="Rhea" id="RHEA-COMP:10623"/>
        <dbReference type="ChEBI" id="CHEBI:15377"/>
        <dbReference type="ChEBI" id="CHEBI:15378"/>
        <dbReference type="ChEBI" id="CHEBI:57618"/>
        <dbReference type="ChEBI" id="CHEBI:58210"/>
        <dbReference type="ChEBI" id="CHEBI:58483"/>
        <dbReference type="ChEBI" id="CHEBI:128753"/>
        <dbReference type="EC" id="1.17.7.3"/>
    </reaction>
</comment>
<comment type="cofactor">
    <cofactor evidence="1">
        <name>[4Fe-4S] cluster</name>
        <dbReference type="ChEBI" id="CHEBI:49883"/>
    </cofactor>
    <text evidence="1">Binds 1 [4Fe-4S] cluster.</text>
</comment>
<comment type="pathway">
    <text evidence="1">Isoprenoid biosynthesis; isopentenyl diphosphate biosynthesis via DXP pathway; isopentenyl diphosphate from 1-deoxy-D-xylulose 5-phosphate: step 5/6.</text>
</comment>
<comment type="similarity">
    <text evidence="1">Belongs to the IspG family.</text>
</comment>
<accession>Q21KT3</accession>
<proteinExistence type="inferred from homology"/>
<evidence type="ECO:0000255" key="1">
    <source>
        <dbReference type="HAMAP-Rule" id="MF_00159"/>
    </source>
</evidence>
<organism>
    <name type="scientific">Saccharophagus degradans (strain 2-40 / ATCC 43961 / DSM 17024)</name>
    <dbReference type="NCBI Taxonomy" id="203122"/>
    <lineage>
        <taxon>Bacteria</taxon>
        <taxon>Pseudomonadati</taxon>
        <taxon>Pseudomonadota</taxon>
        <taxon>Gammaproteobacteria</taxon>
        <taxon>Cellvibrionales</taxon>
        <taxon>Cellvibrionaceae</taxon>
        <taxon>Saccharophagus</taxon>
    </lineage>
</organism>
<keyword id="KW-0004">4Fe-4S</keyword>
<keyword id="KW-0408">Iron</keyword>
<keyword id="KW-0411">Iron-sulfur</keyword>
<keyword id="KW-0414">Isoprene biosynthesis</keyword>
<keyword id="KW-0479">Metal-binding</keyword>
<keyword id="KW-0560">Oxidoreductase</keyword>
<keyword id="KW-1185">Reference proteome</keyword>
<feature type="chain" id="PRO_1000011513" description="4-hydroxy-3-methylbut-2-en-1-yl diphosphate synthase (flavodoxin)">
    <location>
        <begin position="1"/>
        <end position="370"/>
    </location>
</feature>
<feature type="binding site" evidence="1">
    <location>
        <position position="270"/>
    </location>
    <ligand>
        <name>[4Fe-4S] cluster</name>
        <dbReference type="ChEBI" id="CHEBI:49883"/>
    </ligand>
</feature>
<feature type="binding site" evidence="1">
    <location>
        <position position="273"/>
    </location>
    <ligand>
        <name>[4Fe-4S] cluster</name>
        <dbReference type="ChEBI" id="CHEBI:49883"/>
    </ligand>
</feature>
<feature type="binding site" evidence="1">
    <location>
        <position position="305"/>
    </location>
    <ligand>
        <name>[4Fe-4S] cluster</name>
        <dbReference type="ChEBI" id="CHEBI:49883"/>
    </ligand>
</feature>
<feature type="binding site" evidence="1">
    <location>
        <position position="312"/>
    </location>
    <ligand>
        <name>[4Fe-4S] cluster</name>
        <dbReference type="ChEBI" id="CHEBI:49883"/>
    </ligand>
</feature>
<dbReference type="EC" id="1.17.7.3" evidence="1"/>
<dbReference type="EMBL" id="CP000282">
    <property type="protein sequence ID" value="ABD80696.1"/>
    <property type="molecule type" value="Genomic_DNA"/>
</dbReference>
<dbReference type="RefSeq" id="WP_011467916.1">
    <property type="nucleotide sequence ID" value="NC_007912.1"/>
</dbReference>
<dbReference type="SMR" id="Q21KT3"/>
<dbReference type="STRING" id="203122.Sde_1434"/>
<dbReference type="GeneID" id="98613110"/>
<dbReference type="KEGG" id="sde:Sde_1434"/>
<dbReference type="eggNOG" id="COG0821">
    <property type="taxonomic scope" value="Bacteria"/>
</dbReference>
<dbReference type="HOGENOM" id="CLU_042258_0_0_6"/>
<dbReference type="OrthoDB" id="9803214at2"/>
<dbReference type="UniPathway" id="UPA00056">
    <property type="reaction ID" value="UER00096"/>
</dbReference>
<dbReference type="Proteomes" id="UP000001947">
    <property type="component" value="Chromosome"/>
</dbReference>
<dbReference type="GO" id="GO:0051539">
    <property type="term" value="F:4 iron, 4 sulfur cluster binding"/>
    <property type="evidence" value="ECO:0007669"/>
    <property type="project" value="UniProtKB-UniRule"/>
</dbReference>
<dbReference type="GO" id="GO:0046429">
    <property type="term" value="F:4-hydroxy-3-methylbut-2-en-1-yl diphosphate synthase activity (ferredoxin)"/>
    <property type="evidence" value="ECO:0007669"/>
    <property type="project" value="UniProtKB-UniRule"/>
</dbReference>
<dbReference type="GO" id="GO:0141197">
    <property type="term" value="F:4-hydroxy-3-methylbut-2-enyl-diphosphate synthase activity (flavodoxin)"/>
    <property type="evidence" value="ECO:0007669"/>
    <property type="project" value="UniProtKB-EC"/>
</dbReference>
<dbReference type="GO" id="GO:0005506">
    <property type="term" value="F:iron ion binding"/>
    <property type="evidence" value="ECO:0007669"/>
    <property type="project" value="InterPro"/>
</dbReference>
<dbReference type="GO" id="GO:0019288">
    <property type="term" value="P:isopentenyl diphosphate biosynthetic process, methylerythritol 4-phosphate pathway"/>
    <property type="evidence" value="ECO:0007669"/>
    <property type="project" value="UniProtKB-UniRule"/>
</dbReference>
<dbReference type="GO" id="GO:0016114">
    <property type="term" value="P:terpenoid biosynthetic process"/>
    <property type="evidence" value="ECO:0007669"/>
    <property type="project" value="InterPro"/>
</dbReference>
<dbReference type="FunFam" id="3.20.20.20:FF:000001">
    <property type="entry name" value="4-hydroxy-3-methylbut-2-en-1-yl diphosphate synthase (flavodoxin)"/>
    <property type="match status" value="1"/>
</dbReference>
<dbReference type="Gene3D" id="3.20.20.20">
    <property type="entry name" value="Dihydropteroate synthase-like"/>
    <property type="match status" value="1"/>
</dbReference>
<dbReference type="Gene3D" id="3.30.413.10">
    <property type="entry name" value="Sulfite Reductase Hemoprotein, domain 1"/>
    <property type="match status" value="1"/>
</dbReference>
<dbReference type="HAMAP" id="MF_00159">
    <property type="entry name" value="IspG"/>
    <property type="match status" value="1"/>
</dbReference>
<dbReference type="InterPro" id="IPR011005">
    <property type="entry name" value="Dihydropteroate_synth-like_sf"/>
</dbReference>
<dbReference type="InterPro" id="IPR016425">
    <property type="entry name" value="IspG_bac"/>
</dbReference>
<dbReference type="InterPro" id="IPR004588">
    <property type="entry name" value="IspG_bac-typ"/>
</dbReference>
<dbReference type="InterPro" id="IPR045854">
    <property type="entry name" value="NO2/SO3_Rdtase_4Fe4S_sf"/>
</dbReference>
<dbReference type="NCBIfam" id="TIGR00612">
    <property type="entry name" value="ispG_gcpE"/>
    <property type="match status" value="1"/>
</dbReference>
<dbReference type="NCBIfam" id="NF001540">
    <property type="entry name" value="PRK00366.1"/>
    <property type="match status" value="1"/>
</dbReference>
<dbReference type="PANTHER" id="PTHR30454">
    <property type="entry name" value="4-HYDROXY-3-METHYLBUT-2-EN-1-YL DIPHOSPHATE SYNTHASE"/>
    <property type="match status" value="1"/>
</dbReference>
<dbReference type="PANTHER" id="PTHR30454:SF0">
    <property type="entry name" value="4-HYDROXY-3-METHYLBUT-2-EN-1-YL DIPHOSPHATE SYNTHASE (FERREDOXIN), CHLOROPLASTIC"/>
    <property type="match status" value="1"/>
</dbReference>
<dbReference type="Pfam" id="PF04551">
    <property type="entry name" value="GcpE"/>
    <property type="match status" value="1"/>
</dbReference>
<dbReference type="PIRSF" id="PIRSF004640">
    <property type="entry name" value="IspG"/>
    <property type="match status" value="1"/>
</dbReference>
<dbReference type="SUPFAM" id="SSF51717">
    <property type="entry name" value="Dihydropteroate synthetase-like"/>
    <property type="match status" value="1"/>
</dbReference>
<dbReference type="SUPFAM" id="SSF56014">
    <property type="entry name" value="Nitrite and sulphite reductase 4Fe-4S domain-like"/>
    <property type="match status" value="1"/>
</dbReference>
<sequence length="370" mass="40187">MQFESPIKRRKSRQIMVGDVAVGGDAPITIQSMTNTETTDVEATVAQIERIQMAGADIVRVSVPSMDAAEAFGAIRKRVSIPLVADIHFDYRIALRVADLGVDCLRINPGNIGREKRILAVVDKARDLNIPIRIGVNAGSLEKDLQTKYGEPTPDALVESALRHVEILDKYDFQNFKVSVKASDVFMAVAAYRKLATQIEQPLHLGITEAGGLRGGTVKSSVGLGMLLMDGIGDTIRVSLAADPVEEVKVGWDILKSLKLRSKGINFIACPSCSRQNFDVIKTMNELEMRLEDITTPLDVAVIGCVVNGPGEAKEVDVGLAGGTPKNLVYVNGVPSQKFEQENLVDSLEQLIRKQAAEKEAKEKDIIAKV</sequence>
<protein>
    <recommendedName>
        <fullName evidence="1">4-hydroxy-3-methylbut-2-en-1-yl diphosphate synthase (flavodoxin)</fullName>
        <ecNumber evidence="1">1.17.7.3</ecNumber>
    </recommendedName>
    <alternativeName>
        <fullName evidence="1">1-hydroxy-2-methyl-2-(E)-butenyl 4-diphosphate synthase</fullName>
    </alternativeName>
</protein>
<name>ISPG_SACD2</name>